<reference key="1">
    <citation type="journal article" date="2005" name="Nat. Biotechnol.">
        <title>The genome sequence of the ethanologenic bacterium Zymomonas mobilis ZM4.</title>
        <authorList>
            <person name="Seo J.-S."/>
            <person name="Chong H."/>
            <person name="Park H.S."/>
            <person name="Yoon K.-O."/>
            <person name="Jung C."/>
            <person name="Kim J.J."/>
            <person name="Hong J.H."/>
            <person name="Kim H."/>
            <person name="Kim J.-H."/>
            <person name="Kil J.-I."/>
            <person name="Park C.J."/>
            <person name="Oh H.-M."/>
            <person name="Lee J.-S."/>
            <person name="Jin S.-J."/>
            <person name="Um H.-W."/>
            <person name="Lee H.-J."/>
            <person name="Oh S.-J."/>
            <person name="Kim J.Y."/>
            <person name="Kang H.L."/>
            <person name="Lee S.Y."/>
            <person name="Lee K.J."/>
            <person name="Kang H.S."/>
        </authorList>
    </citation>
    <scope>NUCLEOTIDE SEQUENCE [LARGE SCALE GENOMIC DNA]</scope>
    <source>
        <strain>ATCC 31821 / ZM4 / CP4</strain>
    </source>
</reference>
<evidence type="ECO:0000255" key="1">
    <source>
        <dbReference type="HAMAP-Rule" id="MF_01363"/>
    </source>
</evidence>
<evidence type="ECO:0000305" key="2"/>
<accession>Q5NR19</accession>
<protein>
    <recommendedName>
        <fullName evidence="1">Large ribosomal subunit protein bL21</fullName>
    </recommendedName>
    <alternativeName>
        <fullName evidence="2">50S ribosomal protein L21</fullName>
    </alternativeName>
</protein>
<gene>
    <name evidence="1" type="primary">rplU</name>
    <name type="ordered locus">ZMO0211</name>
</gene>
<feature type="chain" id="PRO_0000269439" description="Large ribosomal subunit protein bL21">
    <location>
        <begin position="1"/>
        <end position="102"/>
    </location>
</feature>
<organism>
    <name type="scientific">Zymomonas mobilis subsp. mobilis (strain ATCC 31821 / ZM4 / CP4)</name>
    <dbReference type="NCBI Taxonomy" id="264203"/>
    <lineage>
        <taxon>Bacteria</taxon>
        <taxon>Pseudomonadati</taxon>
        <taxon>Pseudomonadota</taxon>
        <taxon>Alphaproteobacteria</taxon>
        <taxon>Sphingomonadales</taxon>
        <taxon>Zymomonadaceae</taxon>
        <taxon>Zymomonas</taxon>
    </lineage>
</organism>
<sequence>MFAIVRTGGKQYRVAAGDKIVVEKIAGEAGTTVSLEDVLLAGEGADLQPVKGLTVSAEIIAQAKAEKVIVFKKRRRHNYRRRNGHRQQHTILKIVSVGNAAA</sequence>
<dbReference type="EMBL" id="AE008692">
    <property type="protein sequence ID" value="AAV88835.1"/>
    <property type="status" value="ALT_INIT"/>
    <property type="molecule type" value="Genomic_DNA"/>
</dbReference>
<dbReference type="RefSeq" id="WP_014500625.1">
    <property type="nucleotide sequence ID" value="NZ_CP035711.1"/>
</dbReference>
<dbReference type="SMR" id="Q5NR19"/>
<dbReference type="STRING" id="264203.ZMO0211"/>
<dbReference type="GeneID" id="79904555"/>
<dbReference type="KEGG" id="zmo:ZMO0211"/>
<dbReference type="eggNOG" id="COG0261">
    <property type="taxonomic scope" value="Bacteria"/>
</dbReference>
<dbReference type="HOGENOM" id="CLU_061463_1_2_5"/>
<dbReference type="Proteomes" id="UP000001173">
    <property type="component" value="Chromosome"/>
</dbReference>
<dbReference type="GO" id="GO:0005737">
    <property type="term" value="C:cytoplasm"/>
    <property type="evidence" value="ECO:0007669"/>
    <property type="project" value="UniProtKB-ARBA"/>
</dbReference>
<dbReference type="GO" id="GO:1990904">
    <property type="term" value="C:ribonucleoprotein complex"/>
    <property type="evidence" value="ECO:0007669"/>
    <property type="project" value="UniProtKB-KW"/>
</dbReference>
<dbReference type="GO" id="GO:0005840">
    <property type="term" value="C:ribosome"/>
    <property type="evidence" value="ECO:0007669"/>
    <property type="project" value="UniProtKB-KW"/>
</dbReference>
<dbReference type="GO" id="GO:0019843">
    <property type="term" value="F:rRNA binding"/>
    <property type="evidence" value="ECO:0007669"/>
    <property type="project" value="UniProtKB-UniRule"/>
</dbReference>
<dbReference type="GO" id="GO:0003735">
    <property type="term" value="F:structural constituent of ribosome"/>
    <property type="evidence" value="ECO:0007669"/>
    <property type="project" value="InterPro"/>
</dbReference>
<dbReference type="GO" id="GO:0006412">
    <property type="term" value="P:translation"/>
    <property type="evidence" value="ECO:0007669"/>
    <property type="project" value="UniProtKB-UniRule"/>
</dbReference>
<dbReference type="HAMAP" id="MF_01363">
    <property type="entry name" value="Ribosomal_bL21"/>
    <property type="match status" value="1"/>
</dbReference>
<dbReference type="InterPro" id="IPR028909">
    <property type="entry name" value="bL21-like"/>
</dbReference>
<dbReference type="InterPro" id="IPR036164">
    <property type="entry name" value="bL21-like_sf"/>
</dbReference>
<dbReference type="InterPro" id="IPR001787">
    <property type="entry name" value="Ribosomal_bL21"/>
</dbReference>
<dbReference type="NCBIfam" id="TIGR00061">
    <property type="entry name" value="L21"/>
    <property type="match status" value="1"/>
</dbReference>
<dbReference type="PANTHER" id="PTHR21349">
    <property type="entry name" value="50S RIBOSOMAL PROTEIN L21"/>
    <property type="match status" value="1"/>
</dbReference>
<dbReference type="PANTHER" id="PTHR21349:SF0">
    <property type="entry name" value="LARGE RIBOSOMAL SUBUNIT PROTEIN BL21M"/>
    <property type="match status" value="1"/>
</dbReference>
<dbReference type="Pfam" id="PF00829">
    <property type="entry name" value="Ribosomal_L21p"/>
    <property type="match status" value="1"/>
</dbReference>
<dbReference type="SUPFAM" id="SSF141091">
    <property type="entry name" value="L21p-like"/>
    <property type="match status" value="1"/>
</dbReference>
<proteinExistence type="inferred from homology"/>
<keyword id="KW-1185">Reference proteome</keyword>
<keyword id="KW-0687">Ribonucleoprotein</keyword>
<keyword id="KW-0689">Ribosomal protein</keyword>
<keyword id="KW-0694">RNA-binding</keyword>
<keyword id="KW-0699">rRNA-binding</keyword>
<name>RL21_ZYMMO</name>
<comment type="function">
    <text evidence="1">This protein binds to 23S rRNA in the presence of protein L20.</text>
</comment>
<comment type="subunit">
    <text evidence="1">Part of the 50S ribosomal subunit. Contacts protein L20.</text>
</comment>
<comment type="similarity">
    <text evidence="1">Belongs to the bacterial ribosomal protein bL21 family.</text>
</comment>
<comment type="sequence caution" evidence="2">
    <conflict type="erroneous initiation">
        <sequence resource="EMBL-CDS" id="AAV88835"/>
    </conflict>
</comment>